<feature type="chain" id="PRO_0000164724" description="Gene 18 protein">
    <location>
        <begin position="1"/>
        <end position="51"/>
    </location>
</feature>
<feature type="region of interest" description="Disordered" evidence="1">
    <location>
        <begin position="24"/>
        <end position="51"/>
    </location>
</feature>
<feature type="compositionally biased region" description="Basic residues" evidence="1">
    <location>
        <begin position="29"/>
        <end position="38"/>
    </location>
</feature>
<accession>O64211</accession>
<reference key="1">
    <citation type="journal article" date="1998" name="J. Mol. Biol.">
        <title>Genome structure of mycobacteriophage D29: implications for phage evolution.</title>
        <authorList>
            <person name="Ford M.E."/>
            <person name="Sarkis G.J."/>
            <person name="Belanger A.E."/>
            <person name="Hendrix R.W."/>
            <person name="Hatfull G.F."/>
        </authorList>
    </citation>
    <scope>NUCLEOTIDE SEQUENCE [LARGE SCALE GENOMIC DNA]</scope>
</reference>
<dbReference type="EMBL" id="AF022214">
    <property type="protein sequence ID" value="AAC18458.1"/>
    <property type="molecule type" value="Genomic_DNA"/>
</dbReference>
<dbReference type="PIR" id="G72801">
    <property type="entry name" value="G72801"/>
</dbReference>
<dbReference type="RefSeq" id="NP_046833.1">
    <property type="nucleotide sequence ID" value="NC_001900.1"/>
</dbReference>
<dbReference type="SMR" id="O64211"/>
<dbReference type="GeneID" id="1261598"/>
<dbReference type="KEGG" id="vg:1261598"/>
<dbReference type="Proteomes" id="UP000002131">
    <property type="component" value="Segment"/>
</dbReference>
<dbReference type="InterPro" id="IPR055726">
    <property type="entry name" value="DUF7302"/>
</dbReference>
<dbReference type="Pfam" id="PF23976">
    <property type="entry name" value="DUF7302"/>
    <property type="match status" value="1"/>
</dbReference>
<name>VG18_BPMD2</name>
<proteinExistence type="predicted"/>
<gene>
    <name type="primary">18</name>
</gene>
<keyword id="KW-1185">Reference proteome</keyword>
<evidence type="ECO:0000256" key="1">
    <source>
        <dbReference type="SAM" id="MobiDB-lite"/>
    </source>
</evidence>
<organism>
    <name type="scientific">Mycobacterium phage D29</name>
    <name type="common">Mycobacteriophage D29</name>
    <dbReference type="NCBI Taxonomy" id="28369"/>
    <lineage>
        <taxon>Viruses</taxon>
        <taxon>Duplodnaviria</taxon>
        <taxon>Heunggongvirae</taxon>
        <taxon>Uroviricota</taxon>
        <taxon>Caudoviricetes</taxon>
        <taxon>Fromanvirus</taxon>
    </lineage>
</organism>
<sequence length="51" mass="5680">MRIQSTVNGGFAEVSDEYAQRLIAAGGWKRPRKPRTTKPKPAPKQEPATEE</sequence>
<organismHost>
    <name type="scientific">Mycobacterium</name>
    <dbReference type="NCBI Taxonomy" id="1763"/>
</organismHost>
<protein>
    <recommendedName>
        <fullName>Gene 18 protein</fullName>
    </recommendedName>
    <alternativeName>
        <fullName>Gp18</fullName>
    </alternativeName>
</protein>